<reference key="1">
    <citation type="journal article" date="2002" name="Nature">
        <title>The genome sequence of Schizosaccharomyces pombe.</title>
        <authorList>
            <person name="Wood V."/>
            <person name="Gwilliam R."/>
            <person name="Rajandream M.A."/>
            <person name="Lyne M.H."/>
            <person name="Lyne R."/>
            <person name="Stewart A."/>
            <person name="Sgouros J.G."/>
            <person name="Peat N."/>
            <person name="Hayles J."/>
            <person name="Baker S.G."/>
            <person name="Basham D."/>
            <person name="Bowman S."/>
            <person name="Brooks K."/>
            <person name="Brown D."/>
            <person name="Brown S."/>
            <person name="Chillingworth T."/>
            <person name="Churcher C.M."/>
            <person name="Collins M."/>
            <person name="Connor R."/>
            <person name="Cronin A."/>
            <person name="Davis P."/>
            <person name="Feltwell T."/>
            <person name="Fraser A."/>
            <person name="Gentles S."/>
            <person name="Goble A."/>
            <person name="Hamlin N."/>
            <person name="Harris D.E."/>
            <person name="Hidalgo J."/>
            <person name="Hodgson G."/>
            <person name="Holroyd S."/>
            <person name="Hornsby T."/>
            <person name="Howarth S."/>
            <person name="Huckle E.J."/>
            <person name="Hunt S."/>
            <person name="Jagels K."/>
            <person name="James K.D."/>
            <person name="Jones L."/>
            <person name="Jones M."/>
            <person name="Leather S."/>
            <person name="McDonald S."/>
            <person name="McLean J."/>
            <person name="Mooney P."/>
            <person name="Moule S."/>
            <person name="Mungall K.L."/>
            <person name="Murphy L.D."/>
            <person name="Niblett D."/>
            <person name="Odell C."/>
            <person name="Oliver K."/>
            <person name="O'Neil S."/>
            <person name="Pearson D."/>
            <person name="Quail M.A."/>
            <person name="Rabbinowitsch E."/>
            <person name="Rutherford K.M."/>
            <person name="Rutter S."/>
            <person name="Saunders D."/>
            <person name="Seeger K."/>
            <person name="Sharp S."/>
            <person name="Skelton J."/>
            <person name="Simmonds M.N."/>
            <person name="Squares R."/>
            <person name="Squares S."/>
            <person name="Stevens K."/>
            <person name="Taylor K."/>
            <person name="Taylor R.G."/>
            <person name="Tivey A."/>
            <person name="Walsh S.V."/>
            <person name="Warren T."/>
            <person name="Whitehead S."/>
            <person name="Woodward J.R."/>
            <person name="Volckaert G."/>
            <person name="Aert R."/>
            <person name="Robben J."/>
            <person name="Grymonprez B."/>
            <person name="Weltjens I."/>
            <person name="Vanstreels E."/>
            <person name="Rieger M."/>
            <person name="Schaefer M."/>
            <person name="Mueller-Auer S."/>
            <person name="Gabel C."/>
            <person name="Fuchs M."/>
            <person name="Duesterhoeft A."/>
            <person name="Fritzc C."/>
            <person name="Holzer E."/>
            <person name="Moestl D."/>
            <person name="Hilbert H."/>
            <person name="Borzym K."/>
            <person name="Langer I."/>
            <person name="Beck A."/>
            <person name="Lehrach H."/>
            <person name="Reinhardt R."/>
            <person name="Pohl T.M."/>
            <person name="Eger P."/>
            <person name="Zimmermann W."/>
            <person name="Wedler H."/>
            <person name="Wambutt R."/>
            <person name="Purnelle B."/>
            <person name="Goffeau A."/>
            <person name="Cadieu E."/>
            <person name="Dreano S."/>
            <person name="Gloux S."/>
            <person name="Lelaure V."/>
            <person name="Mottier S."/>
            <person name="Galibert F."/>
            <person name="Aves S.J."/>
            <person name="Xiang Z."/>
            <person name="Hunt C."/>
            <person name="Moore K."/>
            <person name="Hurst S.M."/>
            <person name="Lucas M."/>
            <person name="Rochet M."/>
            <person name="Gaillardin C."/>
            <person name="Tallada V.A."/>
            <person name="Garzon A."/>
            <person name="Thode G."/>
            <person name="Daga R.R."/>
            <person name="Cruzado L."/>
            <person name="Jimenez J."/>
            <person name="Sanchez M."/>
            <person name="del Rey F."/>
            <person name="Benito J."/>
            <person name="Dominguez A."/>
            <person name="Revuelta J.L."/>
            <person name="Moreno S."/>
            <person name="Armstrong J."/>
            <person name="Forsburg S.L."/>
            <person name="Cerutti L."/>
            <person name="Lowe T."/>
            <person name="McCombie W.R."/>
            <person name="Paulsen I."/>
            <person name="Potashkin J."/>
            <person name="Shpakovski G.V."/>
            <person name="Ussery D."/>
            <person name="Barrell B.G."/>
            <person name="Nurse P."/>
        </authorList>
    </citation>
    <scope>NUCLEOTIDE SEQUENCE [LARGE SCALE GENOMIC DNA]</scope>
    <source>
        <strain>972 / ATCC 24843</strain>
    </source>
</reference>
<keyword id="KW-0489">Methyltransferase</keyword>
<keyword id="KW-1185">Reference proteome</keyword>
<keyword id="KW-0949">S-adenosyl-L-methionine</keyword>
<keyword id="KW-0808">Transferase</keyword>
<keyword id="KW-0819">tRNA processing</keyword>
<organism>
    <name type="scientific">Schizosaccharomyces pombe (strain 972 / ATCC 24843)</name>
    <name type="common">Fission yeast</name>
    <dbReference type="NCBI Taxonomy" id="284812"/>
    <lineage>
        <taxon>Eukaryota</taxon>
        <taxon>Fungi</taxon>
        <taxon>Dikarya</taxon>
        <taxon>Ascomycota</taxon>
        <taxon>Taphrinomycotina</taxon>
        <taxon>Schizosaccharomycetes</taxon>
        <taxon>Schizosaccharomycetales</taxon>
        <taxon>Schizosaccharomycetaceae</taxon>
        <taxon>Schizosaccharomyces</taxon>
    </lineage>
</organism>
<proteinExistence type="inferred from homology"/>
<protein>
    <recommendedName>
        <fullName>tRNA wybutosine-synthesizing protein 4</fullName>
        <shortName>tRNA-yW synthesizing protein 4</shortName>
        <ecNumber>2.1.1.290</ecNumber>
        <ecNumber>2.3.1.231</ecNumber>
    </recommendedName>
    <alternativeName>
        <fullName>Leucine carboxyl methyltransferase 2</fullName>
    </alternativeName>
    <alternativeName>
        <fullName>tRNA(Phe) (7-(3-amino-3-(methoxycarbonyl)propyl)wyosine(37)-N)-methoxycarbonyltransferase</fullName>
    </alternativeName>
    <alternativeName>
        <fullName>tRNA(Phe) (7-(3-amino-3-carboxypropyl)wyosine(37)-O)-methyltransferase</fullName>
    </alternativeName>
</protein>
<sequence length="681" mass="77553">MSNKNQRKTKSKDREVRKTNDSSILSKASVEKCGYPGFTVGHSYYQPFIQKSPRRSPSVNRGYWTRCMAIRFAVYQFLKNKTGKRKAIVNLGAGYDPLAFQLLSSHEYNTDDVVFYDVDYPETIENRVQMIRSDSFLSSIVLEDKEFDLDGTEIHTKNYHSFGCNLNLLNQLESCLEKYGIDYCNDAILFISEVAAVYMPRQASEKLIRWMSKFPDAHSCFFEQIAPATFDHPFANVMVKHFKEWGTPLHGLYAYPTIESLKSRWVKNGWEYVEILDVCTFWNFLMDSKLKHLCEMVEPFDEWEEFYFFLQHYSIQHASSKLVGKYDLVESPDPCMQYIRYVKSEIIFNNSPLTLRNSIYSLKRTDLPACLKELPSLRLPAVCDLDDSVIVQGGLSTAGRSKDAYLISEKDDGSIMKITTDSLTSCMGQSVVSIDKKTCMFIGGRESPKKILSSCIYFADGNWSDFPSLPYASHRASSVSIKHNGSSYVVLLAGKPFGGCLIWSDSKRKWNTLKCKDPLFYSRWGACLHWSSKLKKGILCGGMNELNEPVREVLEWEMVLRDDDHFEIVTRVLNFDVQVEILLSRIGSKVVFFGDDSKPIIVGGAAVFRTILWEEESVCINMNDYSVTGVCIEETEKRPVFTMFGISGMGNHLQIFGGGCICFSFGSCLNENATFYKLVSA</sequence>
<feature type="chain" id="PRO_0000226144" description="tRNA wybutosine-synthesizing protein 4">
    <location>
        <begin position="1"/>
        <end position="681"/>
    </location>
</feature>
<feature type="region of interest" description="Disordered" evidence="2">
    <location>
        <begin position="1"/>
        <end position="21"/>
    </location>
</feature>
<feature type="compositionally biased region" description="Basic residues" evidence="2">
    <location>
        <begin position="1"/>
        <end position="11"/>
    </location>
</feature>
<feature type="binding site" evidence="1">
    <location>
        <position position="66"/>
    </location>
    <ligand>
        <name>S-adenosyl-L-methionine</name>
        <dbReference type="ChEBI" id="CHEBI:59789"/>
    </ligand>
</feature>
<feature type="binding site" evidence="1">
    <location>
        <position position="92"/>
    </location>
    <ligand>
        <name>S-adenosyl-L-methionine</name>
        <dbReference type="ChEBI" id="CHEBI:59789"/>
    </ligand>
</feature>
<feature type="binding site" evidence="1">
    <location>
        <position position="119"/>
    </location>
    <ligand>
        <name>S-adenosyl-L-methionine</name>
        <dbReference type="ChEBI" id="CHEBI:59789"/>
    </ligand>
</feature>
<feature type="binding site" evidence="1">
    <location>
        <begin position="165"/>
        <end position="166"/>
    </location>
    <ligand>
        <name>S-adenosyl-L-methionine</name>
        <dbReference type="ChEBI" id="CHEBI:59789"/>
    </ligand>
</feature>
<feature type="binding site" evidence="1">
    <location>
        <position position="193"/>
    </location>
    <ligand>
        <name>S-adenosyl-L-methionine</name>
        <dbReference type="ChEBI" id="CHEBI:59789"/>
    </ligand>
</feature>
<dbReference type="EC" id="2.1.1.290"/>
<dbReference type="EC" id="2.3.1.231"/>
<dbReference type="EMBL" id="CU329671">
    <property type="protein sequence ID" value="CAA19576.1"/>
    <property type="molecule type" value="Genomic_DNA"/>
</dbReference>
<dbReference type="PIR" id="T39814">
    <property type="entry name" value="T39814"/>
</dbReference>
<dbReference type="RefSeq" id="NP_596164.1">
    <property type="nucleotide sequence ID" value="NM_001022084.2"/>
</dbReference>
<dbReference type="SMR" id="O60157"/>
<dbReference type="BioGRID" id="277225">
    <property type="interactions" value="8"/>
</dbReference>
<dbReference type="FunCoup" id="O60157">
    <property type="interactions" value="9"/>
</dbReference>
<dbReference type="STRING" id="284812.O60157"/>
<dbReference type="PaxDb" id="4896-SPBC19C7.08c.1"/>
<dbReference type="EnsemblFungi" id="SPBC19C7.08c.1">
    <property type="protein sequence ID" value="SPBC19C7.08c.1:pep"/>
    <property type="gene ID" value="SPBC19C7.08c"/>
</dbReference>
<dbReference type="GeneID" id="2540701"/>
<dbReference type="KEGG" id="spo:2540701"/>
<dbReference type="PomBase" id="SPBC19C7.08c">
    <property type="gene designation" value="ppm2"/>
</dbReference>
<dbReference type="VEuPathDB" id="FungiDB:SPBC19C7.08c"/>
<dbReference type="eggNOG" id="KOG2918">
    <property type="taxonomic scope" value="Eukaryota"/>
</dbReference>
<dbReference type="HOGENOM" id="CLU_002761_0_0_1"/>
<dbReference type="InParanoid" id="O60157"/>
<dbReference type="OMA" id="FCILEQF"/>
<dbReference type="PhylomeDB" id="O60157"/>
<dbReference type="Reactome" id="R-SPO-69273">
    <property type="pathway name" value="Cyclin A/B1/B2 associated events during G2/M transition"/>
</dbReference>
<dbReference type="UniPathway" id="UPA00375"/>
<dbReference type="PRO" id="PR:O60157"/>
<dbReference type="Proteomes" id="UP000002485">
    <property type="component" value="Chromosome II"/>
</dbReference>
<dbReference type="GO" id="GO:0005829">
    <property type="term" value="C:cytosol"/>
    <property type="evidence" value="ECO:0007005"/>
    <property type="project" value="PomBase"/>
</dbReference>
<dbReference type="GO" id="GO:0005634">
    <property type="term" value="C:nucleus"/>
    <property type="evidence" value="ECO:0007005"/>
    <property type="project" value="PomBase"/>
</dbReference>
<dbReference type="GO" id="GO:0008175">
    <property type="term" value="F:tRNA methyltransferase activity"/>
    <property type="evidence" value="ECO:0000266"/>
    <property type="project" value="PomBase"/>
</dbReference>
<dbReference type="GO" id="GO:0030488">
    <property type="term" value="P:tRNA methylation"/>
    <property type="evidence" value="ECO:0000305"/>
    <property type="project" value="PomBase"/>
</dbReference>
<dbReference type="GO" id="GO:0031591">
    <property type="term" value="P:wybutosine biosynthetic process"/>
    <property type="evidence" value="ECO:0000266"/>
    <property type="project" value="PomBase"/>
</dbReference>
<dbReference type="Gene3D" id="2.120.10.80">
    <property type="entry name" value="Kelch-type beta propeller"/>
    <property type="match status" value="1"/>
</dbReference>
<dbReference type="Gene3D" id="3.40.50.150">
    <property type="entry name" value="Vaccinia Virus protein VP39"/>
    <property type="match status" value="1"/>
</dbReference>
<dbReference type="InterPro" id="IPR011043">
    <property type="entry name" value="Gal_Oxase/kelch_b-propeller"/>
</dbReference>
<dbReference type="InterPro" id="IPR015915">
    <property type="entry name" value="Kelch-typ_b-propeller"/>
</dbReference>
<dbReference type="InterPro" id="IPR007213">
    <property type="entry name" value="Ppm1/Ppm2/Tcmp"/>
</dbReference>
<dbReference type="InterPro" id="IPR029063">
    <property type="entry name" value="SAM-dependent_MTases_sf"/>
</dbReference>
<dbReference type="PANTHER" id="PTHR46529">
    <property type="entry name" value="TRNA WYBUTOSINE-SYNTHESIZING PROTEIN 4"/>
    <property type="match status" value="1"/>
</dbReference>
<dbReference type="PANTHER" id="PTHR46529:SF1">
    <property type="entry name" value="TRNA WYBUTOSINE-SYNTHESIZING PROTEIN 4"/>
    <property type="match status" value="1"/>
</dbReference>
<dbReference type="Pfam" id="PF04072">
    <property type="entry name" value="LCM"/>
    <property type="match status" value="1"/>
</dbReference>
<dbReference type="SUPFAM" id="SSF50965">
    <property type="entry name" value="Galactose oxidase, central domain"/>
    <property type="match status" value="1"/>
</dbReference>
<dbReference type="SUPFAM" id="SSF53335">
    <property type="entry name" value="S-adenosyl-L-methionine-dependent methyltransferases"/>
    <property type="match status" value="1"/>
</dbReference>
<accession>O60157</accession>
<comment type="function">
    <text evidence="1">Probable S-adenosyl-L-methionine-dependent methyltransferase that acts as a component of the wybutosine biosynthesis pathway. Wybutosine is a hyper modified guanosine with a tricyclic base found at the 3'-position adjacent to the anticodon of eukaryotic phenylalanine tRNA. May methylate the carboxyl group of leucine residues to form alpha-leucine ester residues (By similarity).</text>
</comment>
<comment type="catalytic activity">
    <reaction>
        <text>7-[(3S)-3-amino-3-carboxypropyl]wyosine(37) in tRNA(Phe) + S-adenosyl-L-methionine = 7-[(3S)-(3-amino-3-methoxycarbonyl)propyl]wyosine(37) in tRNA(Phe) + S-adenosyl-L-homocysteine</text>
        <dbReference type="Rhea" id="RHEA:36903"/>
        <dbReference type="Rhea" id="RHEA-COMP:10379"/>
        <dbReference type="Rhea" id="RHEA-COMP:11844"/>
        <dbReference type="ChEBI" id="CHEBI:57856"/>
        <dbReference type="ChEBI" id="CHEBI:59789"/>
        <dbReference type="ChEBI" id="CHEBI:73543"/>
        <dbReference type="ChEBI" id="CHEBI:74275"/>
        <dbReference type="EC" id="2.1.1.290"/>
    </reaction>
</comment>
<comment type="catalytic activity">
    <reaction>
        <text>7-[(3S)-(3-amino-3-methoxycarbonyl)propyl]wyosine(37) in tRNA(Phe) + S-adenosyl-L-methionine + CO2 = wybutosine(37) in tRNA(Phe) + S-adenosyl-L-homocysteine + 2 H(+)</text>
        <dbReference type="Rhea" id="RHEA:37119"/>
        <dbReference type="Rhea" id="RHEA-COMP:11844"/>
        <dbReference type="Rhea" id="RHEA-COMP:11847"/>
        <dbReference type="ChEBI" id="CHEBI:15378"/>
        <dbReference type="ChEBI" id="CHEBI:16526"/>
        <dbReference type="ChEBI" id="CHEBI:57856"/>
        <dbReference type="ChEBI" id="CHEBI:59789"/>
        <dbReference type="ChEBI" id="CHEBI:73544"/>
        <dbReference type="ChEBI" id="CHEBI:74275"/>
        <dbReference type="EC" id="2.3.1.231"/>
    </reaction>
</comment>
<comment type="pathway">
    <text>tRNA modification; wybutosine-tRNA(Phe) biosynthesis.</text>
</comment>
<comment type="similarity">
    <text evidence="3">Belongs to the methyltransferase superfamily. LCMT family.</text>
</comment>
<evidence type="ECO:0000250" key="1"/>
<evidence type="ECO:0000256" key="2">
    <source>
        <dbReference type="SAM" id="MobiDB-lite"/>
    </source>
</evidence>
<evidence type="ECO:0000305" key="3"/>
<gene>
    <name type="primary">ppm2</name>
    <name type="synonym">tyw4</name>
    <name type="ORF">SPBC19C7.08c</name>
</gene>
<name>TYW4_SCHPO</name>